<comment type="function">
    <text evidence="1">Part of the ABC transporter complex CcmAB involved in the biogenesis of c-type cytochromes; once thought to export heme, this seems not to be the case, but its exact role is uncertain. Responsible for energy coupling to the transport system.</text>
</comment>
<comment type="catalytic activity">
    <reaction evidence="1">
        <text>heme b(in) + ATP + H2O = heme b(out) + ADP + phosphate + H(+)</text>
        <dbReference type="Rhea" id="RHEA:19261"/>
        <dbReference type="ChEBI" id="CHEBI:15377"/>
        <dbReference type="ChEBI" id="CHEBI:15378"/>
        <dbReference type="ChEBI" id="CHEBI:30616"/>
        <dbReference type="ChEBI" id="CHEBI:43474"/>
        <dbReference type="ChEBI" id="CHEBI:60344"/>
        <dbReference type="ChEBI" id="CHEBI:456216"/>
        <dbReference type="EC" id="7.6.2.5"/>
    </reaction>
</comment>
<comment type="subunit">
    <text evidence="1">The complex is composed of two ATP-binding proteins (CcmA) and two transmembrane proteins (CcmB).</text>
</comment>
<comment type="subcellular location">
    <subcellularLocation>
        <location evidence="1">Cell inner membrane</location>
        <topology evidence="1">Peripheral membrane protein</topology>
    </subcellularLocation>
</comment>
<comment type="similarity">
    <text evidence="1">Belongs to the ABC transporter superfamily. CcmA exporter (TC 3.A.1.107) family.</text>
</comment>
<keyword id="KW-0067">ATP-binding</keyword>
<keyword id="KW-0997">Cell inner membrane</keyword>
<keyword id="KW-1003">Cell membrane</keyword>
<keyword id="KW-0201">Cytochrome c-type biogenesis</keyword>
<keyword id="KW-0472">Membrane</keyword>
<keyword id="KW-0547">Nucleotide-binding</keyword>
<keyword id="KW-1185">Reference proteome</keyword>
<keyword id="KW-1278">Translocase</keyword>
<keyword id="KW-0813">Transport</keyword>
<name>CCMA_XYLFT</name>
<evidence type="ECO:0000255" key="1">
    <source>
        <dbReference type="HAMAP-Rule" id="MF_01707"/>
    </source>
</evidence>
<organism>
    <name type="scientific">Xylella fastidiosa (strain Temecula1 / ATCC 700964)</name>
    <dbReference type="NCBI Taxonomy" id="183190"/>
    <lineage>
        <taxon>Bacteria</taxon>
        <taxon>Pseudomonadati</taxon>
        <taxon>Pseudomonadota</taxon>
        <taxon>Gammaproteobacteria</taxon>
        <taxon>Lysobacterales</taxon>
        <taxon>Lysobacteraceae</taxon>
        <taxon>Xylella</taxon>
    </lineage>
</organism>
<protein>
    <recommendedName>
        <fullName evidence="1">Cytochrome c biogenesis ATP-binding export protein CcmA</fullName>
        <ecNumber evidence="1">7.6.2.5</ecNumber>
    </recommendedName>
    <alternativeName>
        <fullName evidence="1">Heme exporter protein A</fullName>
    </alternativeName>
</protein>
<feature type="chain" id="PRO_0000092225" description="Cytochrome c biogenesis ATP-binding export protein CcmA">
    <location>
        <begin position="1"/>
        <end position="215"/>
    </location>
</feature>
<feature type="domain" description="ABC transporter" evidence="1">
    <location>
        <begin position="12"/>
        <end position="215"/>
    </location>
</feature>
<feature type="binding site" evidence="1">
    <location>
        <begin position="44"/>
        <end position="51"/>
    </location>
    <ligand>
        <name>ATP</name>
        <dbReference type="ChEBI" id="CHEBI:30616"/>
    </ligand>
</feature>
<gene>
    <name evidence="1" type="primary">ccmA</name>
    <name type="ordered locus">PD_1475</name>
</gene>
<dbReference type="EC" id="7.6.2.5" evidence="1"/>
<dbReference type="EMBL" id="AE009442">
    <property type="protein sequence ID" value="AAO29319.1"/>
    <property type="molecule type" value="Genomic_DNA"/>
</dbReference>
<dbReference type="RefSeq" id="WP_004088477.1">
    <property type="nucleotide sequence ID" value="NC_004556.1"/>
</dbReference>
<dbReference type="SMR" id="Q87BH8"/>
<dbReference type="GeneID" id="93905296"/>
<dbReference type="KEGG" id="xft:PD_1475"/>
<dbReference type="HOGENOM" id="CLU_000604_1_2_6"/>
<dbReference type="Proteomes" id="UP000002516">
    <property type="component" value="Chromosome"/>
</dbReference>
<dbReference type="GO" id="GO:0005886">
    <property type="term" value="C:plasma membrane"/>
    <property type="evidence" value="ECO:0007669"/>
    <property type="project" value="UniProtKB-SubCell"/>
</dbReference>
<dbReference type="GO" id="GO:0015439">
    <property type="term" value="F:ABC-type heme transporter activity"/>
    <property type="evidence" value="ECO:0007669"/>
    <property type="project" value="UniProtKB-EC"/>
</dbReference>
<dbReference type="GO" id="GO:0005524">
    <property type="term" value="F:ATP binding"/>
    <property type="evidence" value="ECO:0007669"/>
    <property type="project" value="UniProtKB-KW"/>
</dbReference>
<dbReference type="GO" id="GO:0016887">
    <property type="term" value="F:ATP hydrolysis activity"/>
    <property type="evidence" value="ECO:0007669"/>
    <property type="project" value="InterPro"/>
</dbReference>
<dbReference type="GO" id="GO:0017004">
    <property type="term" value="P:cytochrome complex assembly"/>
    <property type="evidence" value="ECO:0007669"/>
    <property type="project" value="UniProtKB-KW"/>
</dbReference>
<dbReference type="Gene3D" id="3.40.50.300">
    <property type="entry name" value="P-loop containing nucleotide triphosphate hydrolases"/>
    <property type="match status" value="1"/>
</dbReference>
<dbReference type="InterPro" id="IPR003593">
    <property type="entry name" value="AAA+_ATPase"/>
</dbReference>
<dbReference type="InterPro" id="IPR003439">
    <property type="entry name" value="ABC_transporter-like_ATP-bd"/>
</dbReference>
<dbReference type="InterPro" id="IPR017871">
    <property type="entry name" value="ABC_transporter-like_CS"/>
</dbReference>
<dbReference type="InterPro" id="IPR005895">
    <property type="entry name" value="ABC_transptr_haem_export_CcmA"/>
</dbReference>
<dbReference type="InterPro" id="IPR027417">
    <property type="entry name" value="P-loop_NTPase"/>
</dbReference>
<dbReference type="NCBIfam" id="TIGR01189">
    <property type="entry name" value="ccmA"/>
    <property type="match status" value="1"/>
</dbReference>
<dbReference type="PANTHER" id="PTHR43499">
    <property type="entry name" value="ABC TRANSPORTER I FAMILY MEMBER 1"/>
    <property type="match status" value="1"/>
</dbReference>
<dbReference type="PANTHER" id="PTHR43499:SF1">
    <property type="entry name" value="ABC TRANSPORTER I FAMILY MEMBER 1"/>
    <property type="match status" value="1"/>
</dbReference>
<dbReference type="Pfam" id="PF00005">
    <property type="entry name" value="ABC_tran"/>
    <property type="match status" value="1"/>
</dbReference>
<dbReference type="SMART" id="SM00382">
    <property type="entry name" value="AAA"/>
    <property type="match status" value="1"/>
</dbReference>
<dbReference type="SUPFAM" id="SSF52540">
    <property type="entry name" value="P-loop containing nucleoside triphosphate hydrolases"/>
    <property type="match status" value="1"/>
</dbReference>
<dbReference type="PROSITE" id="PS00211">
    <property type="entry name" value="ABC_TRANSPORTER_1"/>
    <property type="match status" value="1"/>
</dbReference>
<dbReference type="PROSITE" id="PS50893">
    <property type="entry name" value="ABC_TRANSPORTER_2"/>
    <property type="match status" value="1"/>
</dbReference>
<dbReference type="PROSITE" id="PS51243">
    <property type="entry name" value="CCMA"/>
    <property type="match status" value="1"/>
</dbReference>
<reference key="1">
    <citation type="journal article" date="2003" name="J. Bacteriol.">
        <title>Comparative analyses of the complete genome sequences of Pierce's disease and citrus variegated chlorosis strains of Xylella fastidiosa.</title>
        <authorList>
            <person name="Van Sluys M.A."/>
            <person name="de Oliveira M.C."/>
            <person name="Monteiro-Vitorello C.B."/>
            <person name="Miyaki C.Y."/>
            <person name="Furlan L.R."/>
            <person name="Camargo L.E.A."/>
            <person name="da Silva A.C.R."/>
            <person name="Moon D.H."/>
            <person name="Takita M.A."/>
            <person name="Lemos E.G.M."/>
            <person name="Machado M.A."/>
            <person name="Ferro M.I.T."/>
            <person name="da Silva F.R."/>
            <person name="Goldman M.H.S."/>
            <person name="Goldman G.H."/>
            <person name="Lemos M.V.F."/>
            <person name="El-Dorry H."/>
            <person name="Tsai S.M."/>
            <person name="Carrer H."/>
            <person name="Carraro D.M."/>
            <person name="de Oliveira R.C."/>
            <person name="Nunes L.R."/>
            <person name="Siqueira W.J."/>
            <person name="Coutinho L.L."/>
            <person name="Kimura E.T."/>
            <person name="Ferro E.S."/>
            <person name="Harakava R."/>
            <person name="Kuramae E.E."/>
            <person name="Marino C.L."/>
            <person name="Giglioti E."/>
            <person name="Abreu I.L."/>
            <person name="Alves L.M.C."/>
            <person name="do Amaral A.M."/>
            <person name="Baia G.S."/>
            <person name="Blanco S.R."/>
            <person name="Brito M.S."/>
            <person name="Cannavan F.S."/>
            <person name="Celestino A.V."/>
            <person name="da Cunha A.F."/>
            <person name="Fenille R.C."/>
            <person name="Ferro J.A."/>
            <person name="Formighieri E.F."/>
            <person name="Kishi L.T."/>
            <person name="Leoni S.G."/>
            <person name="Oliveira A.R."/>
            <person name="Rosa V.E. Jr."/>
            <person name="Sassaki F.T."/>
            <person name="Sena J.A.D."/>
            <person name="de Souza A.A."/>
            <person name="Truffi D."/>
            <person name="Tsukumo F."/>
            <person name="Yanai G.M."/>
            <person name="Zaros L.G."/>
            <person name="Civerolo E.L."/>
            <person name="Simpson A.J.G."/>
            <person name="Almeida N.F. Jr."/>
            <person name="Setubal J.C."/>
            <person name="Kitajima J.P."/>
        </authorList>
    </citation>
    <scope>NUCLEOTIDE SEQUENCE [LARGE SCALE GENOMIC DNA]</scope>
    <source>
        <strain>Temecula1 / ATCC 700964</strain>
    </source>
</reference>
<accession>Q87BH8</accession>
<proteinExistence type="inferred from homology"/>
<sequence length="215" mass="23232">MTALPSSAPPLLAAHALTYSRNAIPILGPLHFHINPGEALIVQGPNGIGKTTLLRILAGLLHSDSGHIHINTHHNTTAPERTRHIAYLSHLPGLKQDLSALENLHFLNALHGCHPQRTPSNALTIVGLTDHAQTLVRQLSAGQKKRLSLARLWLSPAPLWLLDEPYANLDPEGITLLNHILTTHLHTQGGTLLTTPGALPTLPVPTRLLHLQKAP</sequence>